<name>TIL1_PIMHY</name>
<protein>
    <recommendedName>
        <fullName evidence="4">Cysteine-rich venom protein 1</fullName>
        <shortName evidence="4">cvp1</shortName>
    </recommendedName>
</protein>
<accession>Q8T0W5</accession>
<comment type="function">
    <text evidence="6">May be a phenoloxidase inhibitor that stabilizes or inhibits venom phenoloxidase while it is stored in the venom sac.</text>
</comment>
<comment type="subcellular location">
    <subcellularLocation>
        <location evidence="3">Secreted</location>
    </subcellularLocation>
</comment>
<comment type="tissue specificity">
    <text evidence="6">Expressed by the venom gland.</text>
</comment>
<comment type="similarity">
    <text evidence="5">Belongs to the serine protease inhibitor-like (TIL domain-containing) family.</text>
</comment>
<proteinExistence type="evidence at protein level"/>
<dbReference type="EMBL" id="AJ438992">
    <property type="protein sequence ID" value="CAD27737.1"/>
    <property type="molecule type" value="mRNA"/>
</dbReference>
<dbReference type="SMR" id="Q8T0W5"/>
<dbReference type="GO" id="GO:0005576">
    <property type="term" value="C:extracellular region"/>
    <property type="evidence" value="ECO:0007669"/>
    <property type="project" value="UniProtKB-SubCell"/>
</dbReference>
<dbReference type="CDD" id="cd19941">
    <property type="entry name" value="TIL"/>
    <property type="match status" value="1"/>
</dbReference>
<dbReference type="Gene3D" id="2.10.25.10">
    <property type="entry name" value="Laminin"/>
    <property type="match status" value="1"/>
</dbReference>
<dbReference type="InterPro" id="IPR036084">
    <property type="entry name" value="Ser_inhib-like_sf"/>
</dbReference>
<dbReference type="InterPro" id="IPR002919">
    <property type="entry name" value="TIL_dom"/>
</dbReference>
<dbReference type="Pfam" id="PF01826">
    <property type="entry name" value="TIL"/>
    <property type="match status" value="1"/>
</dbReference>
<dbReference type="SUPFAM" id="SSF57567">
    <property type="entry name" value="Serine protease inhibitors"/>
    <property type="match status" value="1"/>
</dbReference>
<reference evidence="5 7" key="1">
    <citation type="journal article" date="2004" name="Insect Biochem. Mol. Biol.">
        <title>Towards a comprehensive view of the primary structure of venom proteins from the parasitoid wasp Pimpla hypochondriaca.</title>
        <authorList>
            <person name="Parkinson N.M."/>
            <person name="Conyers C."/>
            <person name="Keen J."/>
            <person name="MacNicoll A."/>
            <person name="Smith I."/>
            <person name="Audsley N."/>
            <person name="Weaver R."/>
        </authorList>
    </citation>
    <scope>NUCLEOTIDE SEQUENCE [MRNA]</scope>
    <scope>PROTEIN SEQUENCE OF 22-27</scope>
    <scope>SUBCELLULAR LOCATION</scope>
    <source>
        <tissue evidence="3">Venom</tissue>
        <tissue evidence="3">Venom gland</tissue>
    </source>
</reference>
<feature type="signal peptide" evidence="6">
    <location>
        <begin position="1"/>
        <end position="21"/>
    </location>
</feature>
<feature type="chain" id="PRO_0000034311" description="Cysteine-rich venom protein 1" evidence="6">
    <location>
        <begin position="22"/>
        <end position="85"/>
    </location>
</feature>
<feature type="domain" description="TIL" evidence="2">
    <location>
        <begin position="29"/>
        <end position="84"/>
    </location>
</feature>
<feature type="disulfide bond" evidence="1">
    <location>
        <begin position="29"/>
        <end position="63"/>
    </location>
</feature>
<feature type="disulfide bond" evidence="1">
    <location>
        <begin position="38"/>
        <end position="59"/>
    </location>
</feature>
<feature type="disulfide bond" evidence="1">
    <location>
        <begin position="42"/>
        <end position="53"/>
    </location>
</feature>
<feature type="disulfide bond" evidence="1">
    <location>
        <begin position="46"/>
        <end position="84"/>
    </location>
</feature>
<feature type="disulfide bond" evidence="1">
    <location>
        <begin position="65"/>
        <end position="78"/>
    </location>
</feature>
<organism>
    <name type="scientific">Pimpla hypochondriaca</name>
    <name type="common">Parasitoid wasp</name>
    <dbReference type="NCBI Taxonomy" id="135724"/>
    <lineage>
        <taxon>Eukaryota</taxon>
        <taxon>Metazoa</taxon>
        <taxon>Ecdysozoa</taxon>
        <taxon>Arthropoda</taxon>
        <taxon>Hexapoda</taxon>
        <taxon>Insecta</taxon>
        <taxon>Pterygota</taxon>
        <taxon>Neoptera</taxon>
        <taxon>Endopterygota</taxon>
        <taxon>Hymenoptera</taxon>
        <taxon>Apocrita</taxon>
        <taxon>Ichneumonoidea</taxon>
        <taxon>Ichneumonidae</taxon>
        <taxon>Pimplinae</taxon>
        <taxon>Pimplini</taxon>
        <taxon>Pimpla</taxon>
    </lineage>
</organism>
<keyword id="KW-0903">Direct protein sequencing</keyword>
<keyword id="KW-1015">Disulfide bond</keyword>
<keyword id="KW-0964">Secreted</keyword>
<keyword id="KW-0732">Signal</keyword>
<sequence>MCRYALIVLVVVVVATNLSEANIFDVPTCEPNRIYKTCGPACPPTCEDPDPDCNETPQCKAGCFCIPGLIENMKGGNCISPSLCP</sequence>
<evidence type="ECO:0000250" key="1">
    <source>
        <dbReference type="UniProtKB" id="P56682"/>
    </source>
</evidence>
<evidence type="ECO:0000255" key="2"/>
<evidence type="ECO:0000269" key="3">
    <source>
    </source>
</evidence>
<evidence type="ECO:0000303" key="4">
    <source>
    </source>
</evidence>
<evidence type="ECO:0000305" key="5"/>
<evidence type="ECO:0000305" key="6">
    <source>
    </source>
</evidence>
<evidence type="ECO:0000312" key="7">
    <source>
        <dbReference type="EMBL" id="CAD27737.1"/>
    </source>
</evidence>